<reference key="1">
    <citation type="journal article" date="2002" name="Proc. Natl. Acad. Sci. U.S.A.">
        <title>Genome sequence of a serotype M3 strain of group A Streptococcus: phage-encoded toxins, the high-virulence phenotype, and clone emergence.</title>
        <authorList>
            <person name="Beres S.B."/>
            <person name="Sylva G.L."/>
            <person name="Barbian K.D."/>
            <person name="Lei B."/>
            <person name="Hoff J.S."/>
            <person name="Mammarella N.D."/>
            <person name="Liu M.-Y."/>
            <person name="Smoot J.C."/>
            <person name="Porcella S.F."/>
            <person name="Parkins L.D."/>
            <person name="Campbell D.S."/>
            <person name="Smith T.M."/>
            <person name="McCormick J.K."/>
            <person name="Leung D.Y.M."/>
            <person name="Schlievert P.M."/>
            <person name="Musser J.M."/>
        </authorList>
    </citation>
    <scope>NUCLEOTIDE SEQUENCE [LARGE SCALE GENOMIC DNA]</scope>
    <source>
        <strain>ATCC BAA-595 / MGAS315</strain>
    </source>
</reference>
<comment type="function">
    <text evidence="1">One of the essential components for the initiation of protein synthesis. Stabilizes the binding of IF-2 and IF-3 on the 30S subunit to which N-formylmethionyl-tRNA(fMet) subsequently binds. Helps modulate mRNA selection, yielding the 30S pre-initiation complex (PIC). Upon addition of the 50S ribosomal subunit IF-1, IF-2 and IF-3 are released leaving the mature 70S translation initiation complex.</text>
</comment>
<comment type="subunit">
    <text evidence="1">Component of the 30S ribosomal translation pre-initiation complex which assembles on the 30S ribosome in the order IF-2 and IF-3, IF-1 and N-formylmethionyl-tRNA(fMet); mRNA recruitment can occur at any time during PIC assembly.</text>
</comment>
<comment type="subcellular location">
    <subcellularLocation>
        <location evidence="1">Cytoplasm</location>
    </subcellularLocation>
</comment>
<comment type="similarity">
    <text evidence="1">Belongs to the IF-1 family.</text>
</comment>
<sequence>MAKEDVIEIEGKVVETMPNAMFTVELENGHQILATVSGKIRKNYIRILVGDRVTVEMSPYDLTRGRITYRFK</sequence>
<name>IF1_STRP3</name>
<proteinExistence type="inferred from homology"/>
<evidence type="ECO:0000255" key="1">
    <source>
        <dbReference type="HAMAP-Rule" id="MF_00075"/>
    </source>
</evidence>
<keyword id="KW-0963">Cytoplasm</keyword>
<keyword id="KW-0396">Initiation factor</keyword>
<keyword id="KW-0648">Protein biosynthesis</keyword>
<keyword id="KW-0694">RNA-binding</keyword>
<keyword id="KW-0699">rRNA-binding</keyword>
<organism>
    <name type="scientific">Streptococcus pyogenes serotype M3 (strain ATCC BAA-595 / MGAS315)</name>
    <dbReference type="NCBI Taxonomy" id="198466"/>
    <lineage>
        <taxon>Bacteria</taxon>
        <taxon>Bacillati</taxon>
        <taxon>Bacillota</taxon>
        <taxon>Bacilli</taxon>
        <taxon>Lactobacillales</taxon>
        <taxon>Streptococcaceae</taxon>
        <taxon>Streptococcus</taxon>
    </lineage>
</organism>
<feature type="chain" id="PRO_0000095882" description="Translation initiation factor IF-1">
    <location>
        <begin position="1"/>
        <end position="72"/>
    </location>
</feature>
<feature type="domain" description="S1-like" evidence="1">
    <location>
        <begin position="1"/>
        <end position="72"/>
    </location>
</feature>
<gene>
    <name evidence="1" type="primary">infA</name>
    <name type="ordered locus">SpyM3_0062</name>
</gene>
<protein>
    <recommendedName>
        <fullName evidence="1">Translation initiation factor IF-1</fullName>
    </recommendedName>
</protein>
<dbReference type="EMBL" id="AE014074">
    <property type="protein sequence ID" value="AAM78669.1"/>
    <property type="molecule type" value="Genomic_DNA"/>
</dbReference>
<dbReference type="RefSeq" id="WP_001040189.1">
    <property type="nucleotide sequence ID" value="NC_004070.1"/>
</dbReference>
<dbReference type="SMR" id="P0DB82"/>
<dbReference type="GeneID" id="98392414"/>
<dbReference type="KEGG" id="spg:SpyM3_0062"/>
<dbReference type="HOGENOM" id="CLU_151267_1_0_9"/>
<dbReference type="Proteomes" id="UP000000564">
    <property type="component" value="Chromosome"/>
</dbReference>
<dbReference type="GO" id="GO:0005829">
    <property type="term" value="C:cytosol"/>
    <property type="evidence" value="ECO:0007669"/>
    <property type="project" value="TreeGrafter"/>
</dbReference>
<dbReference type="GO" id="GO:0043022">
    <property type="term" value="F:ribosome binding"/>
    <property type="evidence" value="ECO:0007669"/>
    <property type="project" value="UniProtKB-UniRule"/>
</dbReference>
<dbReference type="GO" id="GO:0019843">
    <property type="term" value="F:rRNA binding"/>
    <property type="evidence" value="ECO:0007669"/>
    <property type="project" value="UniProtKB-UniRule"/>
</dbReference>
<dbReference type="GO" id="GO:0003743">
    <property type="term" value="F:translation initiation factor activity"/>
    <property type="evidence" value="ECO:0007669"/>
    <property type="project" value="UniProtKB-UniRule"/>
</dbReference>
<dbReference type="CDD" id="cd04451">
    <property type="entry name" value="S1_IF1"/>
    <property type="match status" value="1"/>
</dbReference>
<dbReference type="FunFam" id="2.40.50.140:FF:000002">
    <property type="entry name" value="Translation initiation factor IF-1"/>
    <property type="match status" value="1"/>
</dbReference>
<dbReference type="Gene3D" id="2.40.50.140">
    <property type="entry name" value="Nucleic acid-binding proteins"/>
    <property type="match status" value="1"/>
</dbReference>
<dbReference type="HAMAP" id="MF_00075">
    <property type="entry name" value="IF_1"/>
    <property type="match status" value="1"/>
</dbReference>
<dbReference type="InterPro" id="IPR012340">
    <property type="entry name" value="NA-bd_OB-fold"/>
</dbReference>
<dbReference type="InterPro" id="IPR006196">
    <property type="entry name" value="RNA-binding_domain_S1_IF1"/>
</dbReference>
<dbReference type="InterPro" id="IPR003029">
    <property type="entry name" value="S1_domain"/>
</dbReference>
<dbReference type="InterPro" id="IPR004368">
    <property type="entry name" value="TIF_IF1"/>
</dbReference>
<dbReference type="NCBIfam" id="TIGR00008">
    <property type="entry name" value="infA"/>
    <property type="match status" value="1"/>
</dbReference>
<dbReference type="PANTHER" id="PTHR33370">
    <property type="entry name" value="TRANSLATION INITIATION FACTOR IF-1, CHLOROPLASTIC"/>
    <property type="match status" value="1"/>
</dbReference>
<dbReference type="PANTHER" id="PTHR33370:SF1">
    <property type="entry name" value="TRANSLATION INITIATION FACTOR IF-1, CHLOROPLASTIC"/>
    <property type="match status" value="1"/>
</dbReference>
<dbReference type="Pfam" id="PF01176">
    <property type="entry name" value="eIF-1a"/>
    <property type="match status" value="1"/>
</dbReference>
<dbReference type="SMART" id="SM00316">
    <property type="entry name" value="S1"/>
    <property type="match status" value="1"/>
</dbReference>
<dbReference type="SUPFAM" id="SSF50249">
    <property type="entry name" value="Nucleic acid-binding proteins"/>
    <property type="match status" value="1"/>
</dbReference>
<dbReference type="PROSITE" id="PS50832">
    <property type="entry name" value="S1_IF1_TYPE"/>
    <property type="match status" value="1"/>
</dbReference>
<accession>P0DB82</accession>
<accession>P65124</accession>
<accession>Q9A1V3</accession>